<evidence type="ECO:0000255" key="1">
    <source>
        <dbReference type="HAMAP-Rule" id="MF_00182"/>
    </source>
</evidence>
<protein>
    <recommendedName>
        <fullName evidence="1">Methionyl-tRNA formyltransferase</fullName>
        <ecNumber evidence="1">2.1.2.9</ecNumber>
    </recommendedName>
</protein>
<proteinExistence type="inferred from homology"/>
<organism>
    <name type="scientific">Shigella boydii serotype 4 (strain Sb227)</name>
    <dbReference type="NCBI Taxonomy" id="300268"/>
    <lineage>
        <taxon>Bacteria</taxon>
        <taxon>Pseudomonadati</taxon>
        <taxon>Pseudomonadota</taxon>
        <taxon>Gammaproteobacteria</taxon>
        <taxon>Enterobacterales</taxon>
        <taxon>Enterobacteriaceae</taxon>
        <taxon>Shigella</taxon>
    </lineage>
</organism>
<accession>Q31VY9</accession>
<feature type="chain" id="PRO_1000020162" description="Methionyl-tRNA formyltransferase">
    <location>
        <begin position="1"/>
        <end position="315"/>
    </location>
</feature>
<feature type="binding site" evidence="1">
    <location>
        <begin position="113"/>
        <end position="116"/>
    </location>
    <ligand>
        <name>(6S)-5,6,7,8-tetrahydrofolate</name>
        <dbReference type="ChEBI" id="CHEBI:57453"/>
    </ligand>
</feature>
<keyword id="KW-0648">Protein biosynthesis</keyword>
<keyword id="KW-0808">Transferase</keyword>
<dbReference type="EC" id="2.1.2.9" evidence="1"/>
<dbReference type="EMBL" id="CP000036">
    <property type="protein sequence ID" value="ABB67769.1"/>
    <property type="molecule type" value="Genomic_DNA"/>
</dbReference>
<dbReference type="RefSeq" id="WP_000004462.1">
    <property type="nucleotide sequence ID" value="NC_007613.1"/>
</dbReference>
<dbReference type="SMR" id="Q31VY9"/>
<dbReference type="KEGG" id="sbo:SBO_3281"/>
<dbReference type="HOGENOM" id="CLU_033347_1_2_6"/>
<dbReference type="Proteomes" id="UP000007067">
    <property type="component" value="Chromosome"/>
</dbReference>
<dbReference type="GO" id="GO:0005829">
    <property type="term" value="C:cytosol"/>
    <property type="evidence" value="ECO:0007669"/>
    <property type="project" value="TreeGrafter"/>
</dbReference>
<dbReference type="GO" id="GO:0004479">
    <property type="term" value="F:methionyl-tRNA formyltransferase activity"/>
    <property type="evidence" value="ECO:0007669"/>
    <property type="project" value="UniProtKB-UniRule"/>
</dbReference>
<dbReference type="CDD" id="cd08646">
    <property type="entry name" value="FMT_core_Met-tRNA-FMT_N"/>
    <property type="match status" value="1"/>
</dbReference>
<dbReference type="CDD" id="cd08704">
    <property type="entry name" value="Met_tRNA_FMT_C"/>
    <property type="match status" value="1"/>
</dbReference>
<dbReference type="FunFam" id="3.10.25.10:FF:000001">
    <property type="entry name" value="Methionyl-tRNA formyltransferase"/>
    <property type="match status" value="1"/>
</dbReference>
<dbReference type="FunFam" id="3.40.50.170:FF:000003">
    <property type="entry name" value="Methionyl-tRNA formyltransferase"/>
    <property type="match status" value="1"/>
</dbReference>
<dbReference type="Gene3D" id="3.10.25.10">
    <property type="entry name" value="Formyl transferase, C-terminal domain"/>
    <property type="match status" value="1"/>
</dbReference>
<dbReference type="Gene3D" id="3.40.50.170">
    <property type="entry name" value="Formyl transferase, N-terminal domain"/>
    <property type="match status" value="1"/>
</dbReference>
<dbReference type="HAMAP" id="MF_00182">
    <property type="entry name" value="Formyl_trans"/>
    <property type="match status" value="1"/>
</dbReference>
<dbReference type="InterPro" id="IPR005794">
    <property type="entry name" value="Fmt"/>
</dbReference>
<dbReference type="InterPro" id="IPR005793">
    <property type="entry name" value="Formyl_trans_C"/>
</dbReference>
<dbReference type="InterPro" id="IPR037022">
    <property type="entry name" value="Formyl_trans_C_sf"/>
</dbReference>
<dbReference type="InterPro" id="IPR002376">
    <property type="entry name" value="Formyl_transf_N"/>
</dbReference>
<dbReference type="InterPro" id="IPR036477">
    <property type="entry name" value="Formyl_transf_N_sf"/>
</dbReference>
<dbReference type="InterPro" id="IPR011034">
    <property type="entry name" value="Formyl_transferase-like_C_sf"/>
</dbReference>
<dbReference type="InterPro" id="IPR001555">
    <property type="entry name" value="GART_AS"/>
</dbReference>
<dbReference type="InterPro" id="IPR044135">
    <property type="entry name" value="Met-tRNA-FMT_C"/>
</dbReference>
<dbReference type="InterPro" id="IPR041711">
    <property type="entry name" value="Met-tRNA-FMT_N"/>
</dbReference>
<dbReference type="NCBIfam" id="TIGR00460">
    <property type="entry name" value="fmt"/>
    <property type="match status" value="1"/>
</dbReference>
<dbReference type="PANTHER" id="PTHR11138">
    <property type="entry name" value="METHIONYL-TRNA FORMYLTRANSFERASE"/>
    <property type="match status" value="1"/>
</dbReference>
<dbReference type="PANTHER" id="PTHR11138:SF5">
    <property type="entry name" value="METHIONYL-TRNA FORMYLTRANSFERASE, MITOCHONDRIAL"/>
    <property type="match status" value="1"/>
</dbReference>
<dbReference type="Pfam" id="PF02911">
    <property type="entry name" value="Formyl_trans_C"/>
    <property type="match status" value="1"/>
</dbReference>
<dbReference type="Pfam" id="PF00551">
    <property type="entry name" value="Formyl_trans_N"/>
    <property type="match status" value="1"/>
</dbReference>
<dbReference type="SUPFAM" id="SSF50486">
    <property type="entry name" value="FMT C-terminal domain-like"/>
    <property type="match status" value="1"/>
</dbReference>
<dbReference type="SUPFAM" id="SSF53328">
    <property type="entry name" value="Formyltransferase"/>
    <property type="match status" value="1"/>
</dbReference>
<dbReference type="PROSITE" id="PS00373">
    <property type="entry name" value="GART"/>
    <property type="match status" value="1"/>
</dbReference>
<sequence length="315" mass="34286">MSESLRIIFAGTPDFAARHLDALLSSGHNVVGVFTQPDRPAGRGKKLMPSPVKVLAEEKGLPVFQPVSLRPQENQQLVADLQADVMVVVAYGLILPKAVLEMPRLGCINVHGSLLPRWRGAAPIQRSLWAGDAETGVTIMQMDVGLDTGDMLYKLSCPITAEDTSGTLYDKLAELGPQGLITTLKQLADGTAKPEVQDETLVTYAEKLSKEEARIDWSLSAAQLERYIRAFNPWPMSWLEIERQPVKVWKASVIDTATNAAPGTILEANKQGIQVATGDGILNLLSLQPAGKKAMSAQDLLNSRREWFVPGNRLA</sequence>
<comment type="function">
    <text evidence="1">Attaches a formyl group to the free amino group of methionyl-tRNA(fMet). The formyl group appears to play a dual role in the initiator identity of N-formylmethionyl-tRNA by promoting its recognition by IF2 and preventing the misappropriation of this tRNA by the elongation apparatus.</text>
</comment>
<comment type="catalytic activity">
    <reaction evidence="1">
        <text>L-methionyl-tRNA(fMet) + (6R)-10-formyltetrahydrofolate = N-formyl-L-methionyl-tRNA(fMet) + (6S)-5,6,7,8-tetrahydrofolate + H(+)</text>
        <dbReference type="Rhea" id="RHEA:24380"/>
        <dbReference type="Rhea" id="RHEA-COMP:9952"/>
        <dbReference type="Rhea" id="RHEA-COMP:9953"/>
        <dbReference type="ChEBI" id="CHEBI:15378"/>
        <dbReference type="ChEBI" id="CHEBI:57453"/>
        <dbReference type="ChEBI" id="CHEBI:78530"/>
        <dbReference type="ChEBI" id="CHEBI:78844"/>
        <dbReference type="ChEBI" id="CHEBI:195366"/>
        <dbReference type="EC" id="2.1.2.9"/>
    </reaction>
</comment>
<comment type="similarity">
    <text evidence="1">Belongs to the Fmt family.</text>
</comment>
<name>FMT_SHIBS</name>
<gene>
    <name evidence="1" type="primary">fmt</name>
    <name type="ordered locus">SBO_3281</name>
</gene>
<reference key="1">
    <citation type="journal article" date="2005" name="Nucleic Acids Res.">
        <title>Genome dynamics and diversity of Shigella species, the etiologic agents of bacillary dysentery.</title>
        <authorList>
            <person name="Yang F."/>
            <person name="Yang J."/>
            <person name="Zhang X."/>
            <person name="Chen L."/>
            <person name="Jiang Y."/>
            <person name="Yan Y."/>
            <person name="Tang X."/>
            <person name="Wang J."/>
            <person name="Xiong Z."/>
            <person name="Dong J."/>
            <person name="Xue Y."/>
            <person name="Zhu Y."/>
            <person name="Xu X."/>
            <person name="Sun L."/>
            <person name="Chen S."/>
            <person name="Nie H."/>
            <person name="Peng J."/>
            <person name="Xu J."/>
            <person name="Wang Y."/>
            <person name="Yuan Z."/>
            <person name="Wen Y."/>
            <person name="Yao Z."/>
            <person name="Shen Y."/>
            <person name="Qiang B."/>
            <person name="Hou Y."/>
            <person name="Yu J."/>
            <person name="Jin Q."/>
        </authorList>
    </citation>
    <scope>NUCLEOTIDE SEQUENCE [LARGE SCALE GENOMIC DNA]</scope>
    <source>
        <strain>Sb227</strain>
    </source>
</reference>